<proteinExistence type="inferred from homology"/>
<feature type="chain" id="PRO_1000002869" description="UDP-N-acetylenolpyruvoylglucosamine reductase">
    <location>
        <begin position="1"/>
        <end position="349"/>
    </location>
</feature>
<feature type="domain" description="FAD-binding PCMH-type" evidence="1">
    <location>
        <begin position="25"/>
        <end position="197"/>
    </location>
</feature>
<feature type="active site" evidence="1">
    <location>
        <position position="173"/>
    </location>
</feature>
<feature type="active site" description="Proton donor" evidence="1">
    <location>
        <position position="249"/>
    </location>
</feature>
<feature type="active site" evidence="1">
    <location>
        <position position="345"/>
    </location>
</feature>
<protein>
    <recommendedName>
        <fullName evidence="1">UDP-N-acetylenolpyruvoylglucosamine reductase</fullName>
        <ecNumber evidence="1">1.3.1.98</ecNumber>
    </recommendedName>
    <alternativeName>
        <fullName evidence="1">UDP-N-acetylmuramate dehydrogenase</fullName>
    </alternativeName>
</protein>
<sequence>MPMPPDDSALSLLPDHPLAAHNTFGIAARARFAARITQAAQFEALHRDPRVANLPQLVLGGGSNIVFTRDFDGVVLLDEIAGRRVVREDDDAWYVEAGGGENWHAFVAWTLEHGMPGLENLALIPGTVGAAPIQNIGAYGLEMKAYFDSLVAVELATGRRERFDAARCAFGYRDSFFKREGRGRFAIVAVTFRLPKQWTPRLGYADVTRELDARGITPEAATPRDVFDAVVAIRRAKLPDPLVLGNAGSFFKNPVIDAAQFDALRARAPDVVSYPQPDGQVKLAAGWLIDRCGWKGRALGAAAVHDRQALVLVNRGGATGADVLALARAIQADVRAQFGVELEAEPVCL</sequence>
<name>MURB_BURCH</name>
<gene>
    <name evidence="1" type="primary">murB</name>
    <name type="ordered locus">Bcen2424_2554</name>
</gene>
<evidence type="ECO:0000255" key="1">
    <source>
        <dbReference type="HAMAP-Rule" id="MF_00037"/>
    </source>
</evidence>
<organism>
    <name type="scientific">Burkholderia cenocepacia (strain HI2424)</name>
    <dbReference type="NCBI Taxonomy" id="331272"/>
    <lineage>
        <taxon>Bacteria</taxon>
        <taxon>Pseudomonadati</taxon>
        <taxon>Pseudomonadota</taxon>
        <taxon>Betaproteobacteria</taxon>
        <taxon>Burkholderiales</taxon>
        <taxon>Burkholderiaceae</taxon>
        <taxon>Burkholderia</taxon>
        <taxon>Burkholderia cepacia complex</taxon>
    </lineage>
</organism>
<keyword id="KW-0131">Cell cycle</keyword>
<keyword id="KW-0132">Cell division</keyword>
<keyword id="KW-0133">Cell shape</keyword>
<keyword id="KW-0961">Cell wall biogenesis/degradation</keyword>
<keyword id="KW-0963">Cytoplasm</keyword>
<keyword id="KW-0274">FAD</keyword>
<keyword id="KW-0285">Flavoprotein</keyword>
<keyword id="KW-0521">NADP</keyword>
<keyword id="KW-0560">Oxidoreductase</keyword>
<keyword id="KW-0573">Peptidoglycan synthesis</keyword>
<dbReference type="EC" id="1.3.1.98" evidence="1"/>
<dbReference type="EMBL" id="CP000458">
    <property type="protein sequence ID" value="ABK09304.1"/>
    <property type="molecule type" value="Genomic_DNA"/>
</dbReference>
<dbReference type="RefSeq" id="WP_011546048.1">
    <property type="nucleotide sequence ID" value="NC_008542.1"/>
</dbReference>
<dbReference type="SMR" id="A0K9X7"/>
<dbReference type="KEGG" id="bch:Bcen2424_2554"/>
<dbReference type="HOGENOM" id="CLU_035304_0_0_4"/>
<dbReference type="UniPathway" id="UPA00219"/>
<dbReference type="GO" id="GO:0005829">
    <property type="term" value="C:cytosol"/>
    <property type="evidence" value="ECO:0007669"/>
    <property type="project" value="TreeGrafter"/>
</dbReference>
<dbReference type="GO" id="GO:0071949">
    <property type="term" value="F:FAD binding"/>
    <property type="evidence" value="ECO:0007669"/>
    <property type="project" value="InterPro"/>
</dbReference>
<dbReference type="GO" id="GO:0008762">
    <property type="term" value="F:UDP-N-acetylmuramate dehydrogenase activity"/>
    <property type="evidence" value="ECO:0007669"/>
    <property type="project" value="UniProtKB-UniRule"/>
</dbReference>
<dbReference type="GO" id="GO:0051301">
    <property type="term" value="P:cell division"/>
    <property type="evidence" value="ECO:0007669"/>
    <property type="project" value="UniProtKB-KW"/>
</dbReference>
<dbReference type="GO" id="GO:0071555">
    <property type="term" value="P:cell wall organization"/>
    <property type="evidence" value="ECO:0007669"/>
    <property type="project" value="UniProtKB-KW"/>
</dbReference>
<dbReference type="GO" id="GO:0009252">
    <property type="term" value="P:peptidoglycan biosynthetic process"/>
    <property type="evidence" value="ECO:0007669"/>
    <property type="project" value="UniProtKB-UniRule"/>
</dbReference>
<dbReference type="GO" id="GO:0008360">
    <property type="term" value="P:regulation of cell shape"/>
    <property type="evidence" value="ECO:0007669"/>
    <property type="project" value="UniProtKB-KW"/>
</dbReference>
<dbReference type="Gene3D" id="3.30.465.10">
    <property type="match status" value="1"/>
</dbReference>
<dbReference type="Gene3D" id="3.90.78.10">
    <property type="entry name" value="UDP-N-acetylenolpyruvoylglucosamine reductase, C-terminal domain"/>
    <property type="match status" value="1"/>
</dbReference>
<dbReference type="Gene3D" id="3.30.43.10">
    <property type="entry name" value="Uridine Diphospho-n-acetylenolpyruvylglucosamine Reductase, domain 2"/>
    <property type="match status" value="1"/>
</dbReference>
<dbReference type="HAMAP" id="MF_00037">
    <property type="entry name" value="MurB"/>
    <property type="match status" value="1"/>
</dbReference>
<dbReference type="InterPro" id="IPR016166">
    <property type="entry name" value="FAD-bd_PCMH"/>
</dbReference>
<dbReference type="InterPro" id="IPR036318">
    <property type="entry name" value="FAD-bd_PCMH-like_sf"/>
</dbReference>
<dbReference type="InterPro" id="IPR016167">
    <property type="entry name" value="FAD-bd_PCMH_sub1"/>
</dbReference>
<dbReference type="InterPro" id="IPR016169">
    <property type="entry name" value="FAD-bd_PCMH_sub2"/>
</dbReference>
<dbReference type="InterPro" id="IPR003170">
    <property type="entry name" value="MurB"/>
</dbReference>
<dbReference type="InterPro" id="IPR011601">
    <property type="entry name" value="MurB_C"/>
</dbReference>
<dbReference type="InterPro" id="IPR036635">
    <property type="entry name" value="MurB_C_sf"/>
</dbReference>
<dbReference type="InterPro" id="IPR006094">
    <property type="entry name" value="Oxid_FAD_bind_N"/>
</dbReference>
<dbReference type="NCBIfam" id="TIGR00179">
    <property type="entry name" value="murB"/>
    <property type="match status" value="1"/>
</dbReference>
<dbReference type="NCBIfam" id="NF000755">
    <property type="entry name" value="PRK00046.1"/>
    <property type="match status" value="1"/>
</dbReference>
<dbReference type="NCBIfam" id="NF010478">
    <property type="entry name" value="PRK13903.1"/>
    <property type="match status" value="1"/>
</dbReference>
<dbReference type="PANTHER" id="PTHR21071">
    <property type="entry name" value="UDP-N-ACETYLENOLPYRUVOYLGLUCOSAMINE REDUCTASE"/>
    <property type="match status" value="1"/>
</dbReference>
<dbReference type="PANTHER" id="PTHR21071:SF4">
    <property type="entry name" value="UDP-N-ACETYLENOLPYRUVOYLGLUCOSAMINE REDUCTASE"/>
    <property type="match status" value="1"/>
</dbReference>
<dbReference type="Pfam" id="PF01565">
    <property type="entry name" value="FAD_binding_4"/>
    <property type="match status" value="1"/>
</dbReference>
<dbReference type="Pfam" id="PF02873">
    <property type="entry name" value="MurB_C"/>
    <property type="match status" value="1"/>
</dbReference>
<dbReference type="SUPFAM" id="SSF56176">
    <property type="entry name" value="FAD-binding/transporter-associated domain-like"/>
    <property type="match status" value="1"/>
</dbReference>
<dbReference type="SUPFAM" id="SSF56194">
    <property type="entry name" value="Uridine diphospho-N-Acetylenolpyruvylglucosamine reductase, MurB, C-terminal domain"/>
    <property type="match status" value="1"/>
</dbReference>
<dbReference type="PROSITE" id="PS51387">
    <property type="entry name" value="FAD_PCMH"/>
    <property type="match status" value="1"/>
</dbReference>
<accession>A0K9X7</accession>
<comment type="function">
    <text evidence="1">Cell wall formation.</text>
</comment>
<comment type="catalytic activity">
    <reaction evidence="1">
        <text>UDP-N-acetyl-alpha-D-muramate + NADP(+) = UDP-N-acetyl-3-O-(1-carboxyvinyl)-alpha-D-glucosamine + NADPH + H(+)</text>
        <dbReference type="Rhea" id="RHEA:12248"/>
        <dbReference type="ChEBI" id="CHEBI:15378"/>
        <dbReference type="ChEBI" id="CHEBI:57783"/>
        <dbReference type="ChEBI" id="CHEBI:58349"/>
        <dbReference type="ChEBI" id="CHEBI:68483"/>
        <dbReference type="ChEBI" id="CHEBI:70757"/>
        <dbReference type="EC" id="1.3.1.98"/>
    </reaction>
</comment>
<comment type="cofactor">
    <cofactor evidence="1">
        <name>FAD</name>
        <dbReference type="ChEBI" id="CHEBI:57692"/>
    </cofactor>
</comment>
<comment type="pathway">
    <text evidence="1">Cell wall biogenesis; peptidoglycan biosynthesis.</text>
</comment>
<comment type="subcellular location">
    <subcellularLocation>
        <location evidence="1">Cytoplasm</location>
    </subcellularLocation>
</comment>
<comment type="similarity">
    <text evidence="1">Belongs to the MurB family.</text>
</comment>
<reference key="1">
    <citation type="submission" date="2006-08" db="EMBL/GenBank/DDBJ databases">
        <title>Complete sequence of chromosome 1 of Burkholderia cenocepacia HI2424.</title>
        <authorList>
            <person name="Copeland A."/>
            <person name="Lucas S."/>
            <person name="Lapidus A."/>
            <person name="Barry K."/>
            <person name="Detter J.C."/>
            <person name="Glavina del Rio T."/>
            <person name="Hammon N."/>
            <person name="Israni S."/>
            <person name="Pitluck S."/>
            <person name="Chain P."/>
            <person name="Malfatti S."/>
            <person name="Shin M."/>
            <person name="Vergez L."/>
            <person name="Schmutz J."/>
            <person name="Larimer F."/>
            <person name="Land M."/>
            <person name="Hauser L."/>
            <person name="Kyrpides N."/>
            <person name="Kim E."/>
            <person name="LiPuma J.J."/>
            <person name="Gonzalez C.F."/>
            <person name="Konstantinidis K."/>
            <person name="Tiedje J.M."/>
            <person name="Richardson P."/>
        </authorList>
    </citation>
    <scope>NUCLEOTIDE SEQUENCE [LARGE SCALE GENOMIC DNA]</scope>
    <source>
        <strain>HI2424</strain>
    </source>
</reference>